<evidence type="ECO:0000255" key="1">
    <source>
        <dbReference type="HAMAP-Rule" id="MF_01661"/>
    </source>
</evidence>
<proteinExistence type="inferred from homology"/>
<gene>
    <name evidence="1" type="primary">rbsD</name>
    <name type="ordered locus">BCQ_0734</name>
</gene>
<accession>B9J4V7</accession>
<protein>
    <recommendedName>
        <fullName evidence="1">D-ribose pyranase</fullName>
        <ecNumber evidence="1">5.4.99.62</ecNumber>
    </recommendedName>
</protein>
<name>RBSD_BACCQ</name>
<dbReference type="EC" id="5.4.99.62" evidence="1"/>
<dbReference type="EMBL" id="CP000227">
    <property type="protein sequence ID" value="ACM11187.1"/>
    <property type="molecule type" value="Genomic_DNA"/>
</dbReference>
<dbReference type="SMR" id="B9J4V7"/>
<dbReference type="KEGG" id="bcq:BCQ_0734"/>
<dbReference type="HOGENOM" id="CLU_135498_0_0_9"/>
<dbReference type="UniPathway" id="UPA00916">
    <property type="reaction ID" value="UER00888"/>
</dbReference>
<dbReference type="Proteomes" id="UP000000441">
    <property type="component" value="Chromosome"/>
</dbReference>
<dbReference type="GO" id="GO:0005829">
    <property type="term" value="C:cytosol"/>
    <property type="evidence" value="ECO:0007669"/>
    <property type="project" value="TreeGrafter"/>
</dbReference>
<dbReference type="GO" id="GO:0062193">
    <property type="term" value="F:D-ribose pyranase activity"/>
    <property type="evidence" value="ECO:0007669"/>
    <property type="project" value="UniProtKB-EC"/>
</dbReference>
<dbReference type="GO" id="GO:0016872">
    <property type="term" value="F:intramolecular lyase activity"/>
    <property type="evidence" value="ECO:0007669"/>
    <property type="project" value="UniProtKB-UniRule"/>
</dbReference>
<dbReference type="GO" id="GO:0048029">
    <property type="term" value="F:monosaccharide binding"/>
    <property type="evidence" value="ECO:0007669"/>
    <property type="project" value="InterPro"/>
</dbReference>
<dbReference type="GO" id="GO:0019303">
    <property type="term" value="P:D-ribose catabolic process"/>
    <property type="evidence" value="ECO:0007669"/>
    <property type="project" value="UniProtKB-UniRule"/>
</dbReference>
<dbReference type="FunFam" id="3.40.1650.10:FF:000003">
    <property type="entry name" value="D-ribose pyranase"/>
    <property type="match status" value="1"/>
</dbReference>
<dbReference type="Gene3D" id="3.40.1650.10">
    <property type="entry name" value="RbsD-like domain"/>
    <property type="match status" value="1"/>
</dbReference>
<dbReference type="HAMAP" id="MF_01661">
    <property type="entry name" value="D_rib_pyranase"/>
    <property type="match status" value="1"/>
</dbReference>
<dbReference type="InterPro" id="IPR023064">
    <property type="entry name" value="D-ribose_pyranase"/>
</dbReference>
<dbReference type="InterPro" id="IPR023750">
    <property type="entry name" value="RbsD-like_sf"/>
</dbReference>
<dbReference type="InterPro" id="IPR007721">
    <property type="entry name" value="RbsD_FucU"/>
</dbReference>
<dbReference type="NCBIfam" id="NF008761">
    <property type="entry name" value="PRK11797.1"/>
    <property type="match status" value="1"/>
</dbReference>
<dbReference type="PANTHER" id="PTHR37831">
    <property type="entry name" value="D-RIBOSE PYRANASE"/>
    <property type="match status" value="1"/>
</dbReference>
<dbReference type="PANTHER" id="PTHR37831:SF1">
    <property type="entry name" value="D-RIBOSE PYRANASE"/>
    <property type="match status" value="1"/>
</dbReference>
<dbReference type="Pfam" id="PF05025">
    <property type="entry name" value="RbsD_FucU"/>
    <property type="match status" value="1"/>
</dbReference>
<dbReference type="SUPFAM" id="SSF102546">
    <property type="entry name" value="RbsD-like"/>
    <property type="match status" value="1"/>
</dbReference>
<organism>
    <name type="scientific">Bacillus cereus (strain Q1)</name>
    <dbReference type="NCBI Taxonomy" id="361100"/>
    <lineage>
        <taxon>Bacteria</taxon>
        <taxon>Bacillati</taxon>
        <taxon>Bacillota</taxon>
        <taxon>Bacilli</taxon>
        <taxon>Bacillales</taxon>
        <taxon>Bacillaceae</taxon>
        <taxon>Bacillus</taxon>
        <taxon>Bacillus cereus group</taxon>
    </lineage>
</organism>
<feature type="chain" id="PRO_1000187135" description="D-ribose pyranase">
    <location>
        <begin position="1"/>
        <end position="131"/>
    </location>
</feature>
<feature type="active site" description="Proton donor" evidence="1">
    <location>
        <position position="20"/>
    </location>
</feature>
<feature type="binding site" evidence="1">
    <location>
        <position position="28"/>
    </location>
    <ligand>
        <name>substrate</name>
    </ligand>
</feature>
<feature type="binding site" evidence="1">
    <location>
        <position position="98"/>
    </location>
    <ligand>
        <name>substrate</name>
    </ligand>
</feature>
<feature type="binding site" evidence="1">
    <location>
        <begin position="120"/>
        <end position="122"/>
    </location>
    <ligand>
        <name>substrate</name>
    </ligand>
</feature>
<comment type="function">
    <text evidence="1">Catalyzes the interconversion of beta-pyran and beta-furan forms of D-ribose.</text>
</comment>
<comment type="catalytic activity">
    <reaction evidence="1">
        <text>beta-D-ribopyranose = beta-D-ribofuranose</text>
        <dbReference type="Rhea" id="RHEA:25432"/>
        <dbReference type="ChEBI" id="CHEBI:27476"/>
        <dbReference type="ChEBI" id="CHEBI:47002"/>
        <dbReference type="EC" id="5.4.99.62"/>
    </reaction>
</comment>
<comment type="pathway">
    <text evidence="1">Carbohydrate metabolism; D-ribose degradation; D-ribose 5-phosphate from beta-D-ribopyranose: step 1/2.</text>
</comment>
<comment type="subunit">
    <text evidence="1">Homodecamer.</text>
</comment>
<comment type="subcellular location">
    <subcellularLocation>
        <location evidence="1">Cytoplasm</location>
    </subcellularLocation>
</comment>
<comment type="similarity">
    <text evidence="1">Belongs to the RbsD / FucU family. RbsD subfamily.</text>
</comment>
<reference key="1">
    <citation type="journal article" date="2009" name="J. Bacteriol.">
        <title>Complete genome sequence of the extremophilic Bacillus cereus strain Q1 with industrial applications.</title>
        <authorList>
            <person name="Xiong Z."/>
            <person name="Jiang Y."/>
            <person name="Qi D."/>
            <person name="Lu H."/>
            <person name="Yang F."/>
            <person name="Yang J."/>
            <person name="Chen L."/>
            <person name="Sun L."/>
            <person name="Xu X."/>
            <person name="Xue Y."/>
            <person name="Zhu Y."/>
            <person name="Jin Q."/>
        </authorList>
    </citation>
    <scope>NUCLEOTIDE SEQUENCE [LARGE SCALE GENOMIC DNA]</scope>
    <source>
        <strain>Q1</strain>
    </source>
</reference>
<sequence length="131" mass="14255">MKKHGVLNSEIAAVLASLGHTDTIVIADCGLPIPDGVKRIDLAVEIGKPSFLDVLQVVADDMAIEKVTLAEEVINNNAEVNKEIELKLIEPAFEYVSHEQFKEHTKKAKAIIRTGEATPYANVILHAGVIF</sequence>
<keyword id="KW-0119">Carbohydrate metabolism</keyword>
<keyword id="KW-0963">Cytoplasm</keyword>
<keyword id="KW-0413">Isomerase</keyword>